<dbReference type="EC" id="2.1.1.104"/>
<dbReference type="EMBL" id="AF046122">
    <property type="protein sequence ID" value="AAC26191.1"/>
    <property type="molecule type" value="mRNA"/>
</dbReference>
<dbReference type="SMR" id="O81185"/>
<dbReference type="UniPathway" id="UPA00711"/>
<dbReference type="GO" id="GO:0042409">
    <property type="term" value="F:caffeoyl-CoA O-methyltransferase activity"/>
    <property type="evidence" value="ECO:0007669"/>
    <property type="project" value="UniProtKB-EC"/>
</dbReference>
<dbReference type="GO" id="GO:0046872">
    <property type="term" value="F:metal ion binding"/>
    <property type="evidence" value="ECO:0007669"/>
    <property type="project" value="UniProtKB-KW"/>
</dbReference>
<dbReference type="GO" id="GO:0009809">
    <property type="term" value="P:lignin biosynthetic process"/>
    <property type="evidence" value="ECO:0007669"/>
    <property type="project" value="UniProtKB-KW"/>
</dbReference>
<dbReference type="GO" id="GO:0032259">
    <property type="term" value="P:methylation"/>
    <property type="evidence" value="ECO:0007669"/>
    <property type="project" value="UniProtKB-KW"/>
</dbReference>
<dbReference type="CDD" id="cd02440">
    <property type="entry name" value="AdoMet_MTases"/>
    <property type="match status" value="1"/>
</dbReference>
<dbReference type="FunFam" id="3.40.50.150:FF:000147">
    <property type="entry name" value="Caffeoyl-CoA O-methyltransferase 1"/>
    <property type="match status" value="1"/>
</dbReference>
<dbReference type="Gene3D" id="3.40.50.150">
    <property type="entry name" value="Vaccinia Virus protein VP39"/>
    <property type="match status" value="1"/>
</dbReference>
<dbReference type="InterPro" id="IPR050362">
    <property type="entry name" value="Cation-dep_OMT"/>
</dbReference>
<dbReference type="InterPro" id="IPR029063">
    <property type="entry name" value="SAM-dependent_MTases_sf"/>
</dbReference>
<dbReference type="InterPro" id="IPR002935">
    <property type="entry name" value="SAM_O-MeTrfase"/>
</dbReference>
<dbReference type="PANTHER" id="PTHR10509:SF74">
    <property type="entry name" value="CAFFEOYL-COA O-METHYLTRANSFERASE 2"/>
    <property type="match status" value="1"/>
</dbReference>
<dbReference type="PANTHER" id="PTHR10509">
    <property type="entry name" value="O-METHYLTRANSFERASE-RELATED"/>
    <property type="match status" value="1"/>
</dbReference>
<dbReference type="Pfam" id="PF01596">
    <property type="entry name" value="Methyltransf_3"/>
    <property type="match status" value="1"/>
</dbReference>
<dbReference type="SUPFAM" id="SSF53335">
    <property type="entry name" value="S-adenosyl-L-methionine-dependent methyltransferases"/>
    <property type="match status" value="1"/>
</dbReference>
<dbReference type="PROSITE" id="PS51682">
    <property type="entry name" value="SAM_OMT_I"/>
    <property type="match status" value="1"/>
</dbReference>
<comment type="function">
    <text>Methylates caffeoyl-CoA to feruloyl-CoA and 5-hydroxyferuloyl-CoA to sinapoyl-CoA. Plays a role in the synthesis of feruloylated polysaccharides. Involved in the reinforcement of the plant cell wall. Also involved in the responding to wounding or pathogen challenge by the increased formation of cell wall-bound ferulic acid polymers.</text>
</comment>
<comment type="catalytic activity">
    <reaction>
        <text>(E)-caffeoyl-CoA + S-adenosyl-L-methionine = (E)-feruloyl-CoA + S-adenosyl-L-homocysteine + H(+)</text>
        <dbReference type="Rhea" id="RHEA:16925"/>
        <dbReference type="ChEBI" id="CHEBI:15378"/>
        <dbReference type="ChEBI" id="CHEBI:57856"/>
        <dbReference type="ChEBI" id="CHEBI:59789"/>
        <dbReference type="ChEBI" id="CHEBI:87136"/>
        <dbReference type="ChEBI" id="CHEBI:87305"/>
        <dbReference type="EC" id="2.1.1.104"/>
    </reaction>
</comment>
<comment type="cofactor">
    <cofactor evidence="1">
        <name>a divalent metal cation</name>
        <dbReference type="ChEBI" id="CHEBI:60240"/>
    </cofactor>
    <text evidence="1">Binds 1 divalent metal cation per subunit.</text>
</comment>
<comment type="pathway">
    <text>Aromatic compound metabolism; phenylpropanoid biosynthesis.</text>
</comment>
<comment type="similarity">
    <text evidence="2">Belongs to the class I-like SAM-binding methyltransferase superfamily. Cation-dependent O-methyltransferase family. CCoAMT subfamily.</text>
</comment>
<name>CAMT1_EUCGL</name>
<keyword id="KW-0438">Lignin biosynthesis</keyword>
<keyword id="KW-0479">Metal-binding</keyword>
<keyword id="KW-0489">Methyltransferase</keyword>
<keyword id="KW-0949">S-adenosyl-L-methionine</keyword>
<keyword id="KW-0808">Transferase</keyword>
<proteinExistence type="evidence at transcript level"/>
<feature type="chain" id="PRO_0000165681" description="Caffeoyl-CoA O-methyltransferase 1">
    <location>
        <begin position="1"/>
        <end position="246"/>
    </location>
</feature>
<feature type="binding site" evidence="1">
    <location>
        <position position="21"/>
    </location>
    <ligand>
        <name>substrate</name>
    </ligand>
</feature>
<feature type="binding site" evidence="2">
    <location>
        <position position="63"/>
    </location>
    <ligand>
        <name>S-adenosyl-L-methionine</name>
        <dbReference type="ChEBI" id="CHEBI:59789"/>
    </ligand>
</feature>
<feature type="binding site" evidence="2">
    <location>
        <position position="85"/>
    </location>
    <ligand>
        <name>S-adenosyl-L-methionine</name>
        <dbReference type="ChEBI" id="CHEBI:59789"/>
    </ligand>
</feature>
<feature type="binding site" evidence="2">
    <location>
        <begin position="87"/>
        <end position="88"/>
    </location>
    <ligand>
        <name>S-adenosyl-L-methionine</name>
        <dbReference type="ChEBI" id="CHEBI:59789"/>
    </ligand>
</feature>
<feature type="binding site" evidence="2">
    <location>
        <position position="93"/>
    </location>
    <ligand>
        <name>S-adenosyl-L-methionine</name>
        <dbReference type="ChEBI" id="CHEBI:59789"/>
    </ligand>
</feature>
<feature type="binding site" evidence="2">
    <location>
        <position position="111"/>
    </location>
    <ligand>
        <name>S-adenosyl-L-methionine</name>
        <dbReference type="ChEBI" id="CHEBI:59789"/>
    </ligand>
</feature>
<feature type="binding site" evidence="2">
    <location>
        <position position="140"/>
    </location>
    <ligand>
        <name>S-adenosyl-L-methionine</name>
        <dbReference type="ChEBI" id="CHEBI:59789"/>
    </ligand>
</feature>
<feature type="binding site" evidence="2">
    <location>
        <position position="162"/>
    </location>
    <ligand>
        <name>a divalent metal cation</name>
        <dbReference type="ChEBI" id="CHEBI:60240"/>
    </ligand>
</feature>
<feature type="binding site" evidence="1">
    <location>
        <position position="162"/>
    </location>
    <ligand>
        <name>substrate</name>
    </ligand>
</feature>
<feature type="binding site" evidence="2">
    <location>
        <position position="164"/>
    </location>
    <ligand>
        <name>S-adenosyl-L-methionine</name>
        <dbReference type="ChEBI" id="CHEBI:59789"/>
    </ligand>
</feature>
<feature type="binding site" evidence="2">
    <location>
        <position position="188"/>
    </location>
    <ligand>
        <name>a divalent metal cation</name>
        <dbReference type="ChEBI" id="CHEBI:60240"/>
    </ligand>
</feature>
<feature type="binding site" evidence="2">
    <location>
        <position position="189"/>
    </location>
    <ligand>
        <name>a divalent metal cation</name>
        <dbReference type="ChEBI" id="CHEBI:60240"/>
    </ligand>
</feature>
<feature type="binding site" evidence="1">
    <location>
        <position position="193"/>
    </location>
    <ligand>
        <name>substrate</name>
    </ligand>
</feature>
<reference key="1">
    <citation type="online journal article" date="1998" name="Plant Gene Register">
        <title>Isolation of a Eucalyptus globulus cDNA encoding caffeoyl-CoA 3-O-methyltransferase.</title>
        <authorList>
            <person name="De Melis L.E."/>
            <person name="Brugliera F."/>
            <person name="Pongracic S."/>
            <person name="Stevenson T.W."/>
        </authorList>
        <locator>PGR98-098</locator>
    </citation>
    <scope>NUCLEOTIDE SEQUENCE [MRNA]</scope>
    <source>
        <tissue>Stem</tissue>
    </source>
</reference>
<protein>
    <recommendedName>
        <fullName>Caffeoyl-CoA O-methyltransferase 1</fullName>
        <ecNumber>2.1.1.104</ecNumber>
    </recommendedName>
    <alternativeName>
        <fullName>Trans-caffeoyl-CoA 3-O-methyltransferase 1</fullName>
        <shortName>CCoAMT-1</shortName>
        <shortName>CCoAOMT-1</shortName>
    </alternativeName>
</protein>
<sequence length="246" mass="27534">MATAGEESQTQAGRHQEVGHKSLLQSDALYQHILETSVYPREPEPMKELREITAKHPWNIMTTSADEGQFLNMLLKLINAKNTMEIGVFTGYSLLATALALPDDGKILAMDINRENYELGLPVIQKAGVADKIDFREGPALPILDQLIEDGKQGSFDFIFVDADKDNYLNYHKRLIELVKVGGLIGYDNTLWNGSVVAPPDAPLRKYVRYYRDFVLELNKALAADPRIEICMLPVGDGITLCRRIS</sequence>
<gene>
    <name type="primary">CCOMT</name>
</gene>
<organism>
    <name type="scientific">Eucalyptus globulus</name>
    <name type="common">Tasmanian blue gum</name>
    <dbReference type="NCBI Taxonomy" id="34317"/>
    <lineage>
        <taxon>Eukaryota</taxon>
        <taxon>Viridiplantae</taxon>
        <taxon>Streptophyta</taxon>
        <taxon>Embryophyta</taxon>
        <taxon>Tracheophyta</taxon>
        <taxon>Spermatophyta</taxon>
        <taxon>Magnoliopsida</taxon>
        <taxon>eudicotyledons</taxon>
        <taxon>Gunneridae</taxon>
        <taxon>Pentapetalae</taxon>
        <taxon>rosids</taxon>
        <taxon>malvids</taxon>
        <taxon>Myrtales</taxon>
        <taxon>Myrtaceae</taxon>
        <taxon>Myrtoideae</taxon>
        <taxon>Eucalypteae</taxon>
        <taxon>Eucalyptus</taxon>
    </lineage>
</organism>
<evidence type="ECO:0000250" key="1">
    <source>
        <dbReference type="UniProtKB" id="Q40313"/>
    </source>
</evidence>
<evidence type="ECO:0000255" key="2">
    <source>
        <dbReference type="PROSITE-ProRule" id="PRU01019"/>
    </source>
</evidence>
<accession>O81185</accession>